<name>UBIA_SERP5</name>
<protein>
    <recommendedName>
        <fullName evidence="1">4-hydroxybenzoate octaprenyltransferase</fullName>
        <ecNumber evidence="1">2.5.1.39</ecNumber>
    </recommendedName>
    <alternativeName>
        <fullName evidence="1">4-HB polyprenyltransferase</fullName>
    </alternativeName>
</protein>
<proteinExistence type="inferred from homology"/>
<comment type="function">
    <text evidence="1">Catalyzes the prenylation of para-hydroxybenzoate (PHB) with an all-trans polyprenyl group. Mediates the second step in the final reaction sequence of ubiquinone-8 (UQ-8) biosynthesis, which is the condensation of the polyisoprenoid side chain with PHB, generating the first membrane-bound Q intermediate 3-octaprenyl-4-hydroxybenzoate.</text>
</comment>
<comment type="catalytic activity">
    <reaction evidence="1">
        <text>all-trans-octaprenyl diphosphate + 4-hydroxybenzoate = 4-hydroxy-3-(all-trans-octaprenyl)benzoate + diphosphate</text>
        <dbReference type="Rhea" id="RHEA:27782"/>
        <dbReference type="ChEBI" id="CHEBI:1617"/>
        <dbReference type="ChEBI" id="CHEBI:17879"/>
        <dbReference type="ChEBI" id="CHEBI:33019"/>
        <dbReference type="ChEBI" id="CHEBI:57711"/>
        <dbReference type="EC" id="2.5.1.39"/>
    </reaction>
</comment>
<comment type="cofactor">
    <cofactor evidence="1">
        <name>Mg(2+)</name>
        <dbReference type="ChEBI" id="CHEBI:18420"/>
    </cofactor>
</comment>
<comment type="pathway">
    <text evidence="1">Cofactor biosynthesis; ubiquinone biosynthesis.</text>
</comment>
<comment type="subcellular location">
    <subcellularLocation>
        <location evidence="1">Cell inner membrane</location>
        <topology evidence="1">Multi-pass membrane protein</topology>
    </subcellularLocation>
</comment>
<comment type="similarity">
    <text evidence="1">Belongs to the UbiA prenyltransferase family.</text>
</comment>
<comment type="sequence caution" evidence="2">
    <conflict type="erroneous initiation">
        <sequence resource="EMBL-CDS" id="ABV43557"/>
    </conflict>
</comment>
<dbReference type="EC" id="2.5.1.39" evidence="1"/>
<dbReference type="EMBL" id="CP000826">
    <property type="protein sequence ID" value="ABV43557.1"/>
    <property type="status" value="ALT_INIT"/>
    <property type="molecule type" value="Genomic_DNA"/>
</dbReference>
<dbReference type="SMR" id="A8GKB7"/>
<dbReference type="STRING" id="399741.Spro_4463"/>
<dbReference type="KEGG" id="spe:Spro_4463"/>
<dbReference type="eggNOG" id="COG0382">
    <property type="taxonomic scope" value="Bacteria"/>
</dbReference>
<dbReference type="HOGENOM" id="CLU_034879_1_0_6"/>
<dbReference type="UniPathway" id="UPA00232"/>
<dbReference type="GO" id="GO:0005886">
    <property type="term" value="C:plasma membrane"/>
    <property type="evidence" value="ECO:0007669"/>
    <property type="project" value="UniProtKB-SubCell"/>
</dbReference>
<dbReference type="GO" id="GO:0008412">
    <property type="term" value="F:4-hydroxybenzoate polyprenyltransferase activity"/>
    <property type="evidence" value="ECO:0007669"/>
    <property type="project" value="UniProtKB-UniRule"/>
</dbReference>
<dbReference type="GO" id="GO:0006744">
    <property type="term" value="P:ubiquinone biosynthetic process"/>
    <property type="evidence" value="ECO:0007669"/>
    <property type="project" value="UniProtKB-UniRule"/>
</dbReference>
<dbReference type="CDD" id="cd13959">
    <property type="entry name" value="PT_UbiA_COQ2"/>
    <property type="match status" value="1"/>
</dbReference>
<dbReference type="FunFam" id="1.10.357.140:FF:000002">
    <property type="entry name" value="4-hydroxybenzoate octaprenyltransferase"/>
    <property type="match status" value="1"/>
</dbReference>
<dbReference type="FunFam" id="1.20.120.1780:FF:000001">
    <property type="entry name" value="4-hydroxybenzoate octaprenyltransferase"/>
    <property type="match status" value="1"/>
</dbReference>
<dbReference type="Gene3D" id="1.10.357.140">
    <property type="entry name" value="UbiA prenyltransferase"/>
    <property type="match status" value="1"/>
</dbReference>
<dbReference type="Gene3D" id="1.20.120.1780">
    <property type="entry name" value="UbiA prenyltransferase"/>
    <property type="match status" value="1"/>
</dbReference>
<dbReference type="HAMAP" id="MF_01635">
    <property type="entry name" value="UbiA"/>
    <property type="match status" value="1"/>
</dbReference>
<dbReference type="InterPro" id="IPR006370">
    <property type="entry name" value="HB_polyprenyltransferase-like"/>
</dbReference>
<dbReference type="InterPro" id="IPR039653">
    <property type="entry name" value="Prenyltransferase"/>
</dbReference>
<dbReference type="InterPro" id="IPR000537">
    <property type="entry name" value="UbiA_prenyltransferase"/>
</dbReference>
<dbReference type="InterPro" id="IPR044878">
    <property type="entry name" value="UbiA_sf"/>
</dbReference>
<dbReference type="NCBIfam" id="TIGR01474">
    <property type="entry name" value="ubiA_proteo"/>
    <property type="match status" value="1"/>
</dbReference>
<dbReference type="PANTHER" id="PTHR11048:SF28">
    <property type="entry name" value="4-HYDROXYBENZOATE POLYPRENYLTRANSFERASE, MITOCHONDRIAL"/>
    <property type="match status" value="1"/>
</dbReference>
<dbReference type="PANTHER" id="PTHR11048">
    <property type="entry name" value="PRENYLTRANSFERASES"/>
    <property type="match status" value="1"/>
</dbReference>
<dbReference type="Pfam" id="PF01040">
    <property type="entry name" value="UbiA"/>
    <property type="match status" value="1"/>
</dbReference>
<gene>
    <name evidence="1" type="primary">ubiA</name>
    <name type="ordered locus">Spro_4463</name>
</gene>
<feature type="chain" id="PRO_0000336984" description="4-hydroxybenzoate octaprenyltransferase">
    <location>
        <begin position="1"/>
        <end position="290"/>
    </location>
</feature>
<feature type="transmembrane region" description="Helical" evidence="1">
    <location>
        <begin position="23"/>
        <end position="43"/>
    </location>
</feature>
<feature type="transmembrane region" description="Helical" evidence="1">
    <location>
        <begin position="46"/>
        <end position="66"/>
    </location>
</feature>
<feature type="transmembrane region" description="Helical" evidence="1">
    <location>
        <begin position="99"/>
        <end position="119"/>
    </location>
</feature>
<feature type="transmembrane region" description="Helical" evidence="1">
    <location>
        <begin position="141"/>
        <end position="161"/>
    </location>
</feature>
<feature type="transmembrane region" description="Helical" evidence="1">
    <location>
        <begin position="170"/>
        <end position="190"/>
    </location>
</feature>
<feature type="transmembrane region" description="Helical" evidence="1">
    <location>
        <begin position="213"/>
        <end position="233"/>
    </location>
</feature>
<feature type="transmembrane region" description="Helical" evidence="1">
    <location>
        <begin position="234"/>
        <end position="254"/>
    </location>
</feature>
<feature type="transmembrane region" description="Helical" evidence="1">
    <location>
        <begin position="268"/>
        <end position="288"/>
    </location>
</feature>
<evidence type="ECO:0000255" key="1">
    <source>
        <dbReference type="HAMAP-Rule" id="MF_01635"/>
    </source>
</evidence>
<evidence type="ECO:0000305" key="2"/>
<accession>A8GKB7</accession>
<sequence length="290" mass="32235">MEGSVNQSKWQAYSHLMRINKPIGTLLLLWPTLWALWLAGKGVPSLSILVVFVVGVFLMRAAGCVVNDYADRAVDGHVKRTAARPMPSGRVSEKEAKVLFVVLVLVSFGLVLTLNAMTIWLSLAALALAWAYPFMKRVTHLPQFVLGAAFGWGIPMAYAAVSESLPLSCWLLLLANICWTVAYDTLYAMVDRDDDLKIGIKSTAILFGRYDKLIVGLLQFATLLLMLWVGYLTQMSGAFYWSLLLAGALFIHQQKQIATRERDACFKAFMDNNYVGLVLFIGIALSYWQG</sequence>
<keyword id="KW-0997">Cell inner membrane</keyword>
<keyword id="KW-1003">Cell membrane</keyword>
<keyword id="KW-0460">Magnesium</keyword>
<keyword id="KW-0472">Membrane</keyword>
<keyword id="KW-0808">Transferase</keyword>
<keyword id="KW-0812">Transmembrane</keyword>
<keyword id="KW-1133">Transmembrane helix</keyword>
<keyword id="KW-0831">Ubiquinone biosynthesis</keyword>
<reference key="1">
    <citation type="submission" date="2007-09" db="EMBL/GenBank/DDBJ databases">
        <title>Complete sequence of chromosome of Serratia proteamaculans 568.</title>
        <authorList>
            <consortium name="US DOE Joint Genome Institute"/>
            <person name="Copeland A."/>
            <person name="Lucas S."/>
            <person name="Lapidus A."/>
            <person name="Barry K."/>
            <person name="Glavina del Rio T."/>
            <person name="Dalin E."/>
            <person name="Tice H."/>
            <person name="Pitluck S."/>
            <person name="Chain P."/>
            <person name="Malfatti S."/>
            <person name="Shin M."/>
            <person name="Vergez L."/>
            <person name="Schmutz J."/>
            <person name="Larimer F."/>
            <person name="Land M."/>
            <person name="Hauser L."/>
            <person name="Kyrpides N."/>
            <person name="Kim E."/>
            <person name="Taghavi S."/>
            <person name="Newman L."/>
            <person name="Vangronsveld J."/>
            <person name="van der Lelie D."/>
            <person name="Richardson P."/>
        </authorList>
    </citation>
    <scope>NUCLEOTIDE SEQUENCE [LARGE SCALE GENOMIC DNA]</scope>
    <source>
        <strain>568</strain>
    </source>
</reference>
<organism>
    <name type="scientific">Serratia proteamaculans (strain 568)</name>
    <dbReference type="NCBI Taxonomy" id="399741"/>
    <lineage>
        <taxon>Bacteria</taxon>
        <taxon>Pseudomonadati</taxon>
        <taxon>Pseudomonadota</taxon>
        <taxon>Gammaproteobacteria</taxon>
        <taxon>Enterobacterales</taxon>
        <taxon>Yersiniaceae</taxon>
        <taxon>Serratia</taxon>
    </lineage>
</organism>